<protein>
    <recommendedName>
        <fullName>Ubiquitin-fold modifier 1</fullName>
        <shortName evidence="5">cUfm1</shortName>
    </recommendedName>
</protein>
<proteinExistence type="evidence at protein level"/>
<feature type="chain" id="PRO_0000042140" description="Ubiquitin-fold modifier 1">
    <location>
        <begin position="1"/>
        <end position="93"/>
    </location>
</feature>
<feature type="propeptide" id="PRO_0000042141" description="Removed in mature form" evidence="1">
    <location>
        <position position="94"/>
    </location>
</feature>
<feature type="cross-link" description="Glycyl lysine isopeptide (Lys-Gly) (interchain with G-Cter in UFM1)" evidence="1">
    <location>
        <position position="79"/>
    </location>
</feature>
<feature type="cross-link" description="Glycyl lysine isopeptide (Gly-Lys) (interchain with K-? in acceptor proteins)" evidence="2">
    <location>
        <position position="93"/>
    </location>
</feature>
<feature type="strand" evidence="9">
    <location>
        <begin position="13"/>
        <end position="20"/>
    </location>
</feature>
<feature type="strand" evidence="9">
    <location>
        <begin position="28"/>
        <end position="34"/>
    </location>
</feature>
<feature type="helix" evidence="9">
    <location>
        <begin position="39"/>
        <end position="49"/>
    </location>
</feature>
<feature type="helix" evidence="9">
    <location>
        <begin position="54"/>
        <end position="56"/>
    </location>
</feature>
<feature type="strand" evidence="9">
    <location>
        <begin position="57"/>
        <end position="66"/>
    </location>
</feature>
<feature type="helix" evidence="9">
    <location>
        <begin position="73"/>
        <end position="79"/>
    </location>
</feature>
<feature type="strand" evidence="9">
    <location>
        <begin position="82"/>
        <end position="88"/>
    </location>
</feature>
<accession>P34661</accession>
<sequence length="94" mass="9791">MSGGTAATTAGSKVTFKITLTSDPKLPFKVLSVPESTPFTAVLKFAAEEFKVPAATSAIITNDGVGVNPAQPAGNIFLKHGSELRLIPRDRVGH</sequence>
<dbReference type="EMBL" id="FO080278">
    <property type="protein sequence ID" value="CCD62548.1"/>
    <property type="molecule type" value="Genomic_DNA"/>
</dbReference>
<dbReference type="EMBL" id="AF303260">
    <property type="protein sequence ID" value="AAG50218.1"/>
    <property type="molecule type" value="mRNA"/>
</dbReference>
<dbReference type="PIR" id="S44903">
    <property type="entry name" value="S44903"/>
</dbReference>
<dbReference type="RefSeq" id="NP_498705.1">
    <property type="nucleotide sequence ID" value="NM_066304.8"/>
</dbReference>
<dbReference type="PDB" id="1L7Y">
    <property type="method" value="NMR"/>
    <property type="chains" value="A=1-94"/>
</dbReference>
<dbReference type="PDB" id="5XDA">
    <property type="method" value="X-ray"/>
    <property type="resolution" value="3.29 A"/>
    <property type="chains" value="G/H/I/J/K/L=11-94"/>
</dbReference>
<dbReference type="PDBsum" id="1L7Y"/>
<dbReference type="PDBsum" id="5XDA"/>
<dbReference type="BMRB" id="P34661"/>
<dbReference type="SMR" id="P34661"/>
<dbReference type="BioGRID" id="41308">
    <property type="interactions" value="13"/>
</dbReference>
<dbReference type="DIP" id="DIP-25558N"/>
<dbReference type="FunCoup" id="P34661">
    <property type="interactions" value="1783"/>
</dbReference>
<dbReference type="IntAct" id="P34661">
    <property type="interactions" value="1"/>
</dbReference>
<dbReference type="STRING" id="6239.ZK652.3.1"/>
<dbReference type="PaxDb" id="6239-ZK652.3.2"/>
<dbReference type="PeptideAtlas" id="P34661"/>
<dbReference type="EnsemblMetazoa" id="ZK652.3.1">
    <property type="protein sequence ID" value="ZK652.3.1"/>
    <property type="gene ID" value="WBGene00044324"/>
</dbReference>
<dbReference type="GeneID" id="176100"/>
<dbReference type="KEGG" id="cel:CELE_ZK652.3"/>
<dbReference type="AGR" id="WB:WBGene00044324"/>
<dbReference type="CTD" id="176100"/>
<dbReference type="WormBase" id="ZK652.3">
    <property type="protein sequence ID" value="CE00449"/>
    <property type="gene ID" value="WBGene00044324"/>
    <property type="gene designation" value="ufm-1"/>
</dbReference>
<dbReference type="eggNOG" id="KOG3483">
    <property type="taxonomic scope" value="Eukaryota"/>
</dbReference>
<dbReference type="GeneTree" id="ENSGT00390000010391"/>
<dbReference type="HOGENOM" id="CLU_175114_0_0_1"/>
<dbReference type="InParanoid" id="P34661"/>
<dbReference type="OMA" id="MEHAVGK"/>
<dbReference type="OrthoDB" id="284357at2759"/>
<dbReference type="PhylomeDB" id="P34661"/>
<dbReference type="SignaLink" id="P34661"/>
<dbReference type="EvolutionaryTrace" id="P34661"/>
<dbReference type="PRO" id="PR:P34661"/>
<dbReference type="Proteomes" id="UP000001940">
    <property type="component" value="Chromosome III"/>
</dbReference>
<dbReference type="Bgee" id="WBGene00044324">
    <property type="expression patterns" value="Expressed in pharyngeal muscle cell (C elegans) and 4 other cell types or tissues"/>
</dbReference>
<dbReference type="GO" id="GO:0005737">
    <property type="term" value="C:cytoplasm"/>
    <property type="evidence" value="ECO:0000318"/>
    <property type="project" value="GO_Central"/>
</dbReference>
<dbReference type="GO" id="GO:0005634">
    <property type="term" value="C:nucleus"/>
    <property type="evidence" value="ECO:0000318"/>
    <property type="project" value="GO_Central"/>
</dbReference>
<dbReference type="GO" id="GO:0071569">
    <property type="term" value="P:protein ufmylation"/>
    <property type="evidence" value="ECO:0007669"/>
    <property type="project" value="InterPro"/>
</dbReference>
<dbReference type="GO" id="GO:0034976">
    <property type="term" value="P:response to endoplasmic reticulum stress"/>
    <property type="evidence" value="ECO:0000318"/>
    <property type="project" value="GO_Central"/>
</dbReference>
<dbReference type="GO" id="GO:0061709">
    <property type="term" value="P:reticulophagy"/>
    <property type="evidence" value="ECO:0000318"/>
    <property type="project" value="GO_Central"/>
</dbReference>
<dbReference type="CDD" id="cd01766">
    <property type="entry name" value="Ubl_UFM1"/>
    <property type="match status" value="1"/>
</dbReference>
<dbReference type="FunFam" id="3.10.20.90:FF:000044">
    <property type="entry name" value="Ubiquitin-fold modifier 1"/>
    <property type="match status" value="1"/>
</dbReference>
<dbReference type="Gene3D" id="3.10.20.90">
    <property type="entry name" value="Phosphatidylinositol 3-kinase Catalytic Subunit, Chain A, domain 1"/>
    <property type="match status" value="1"/>
</dbReference>
<dbReference type="InterPro" id="IPR029071">
    <property type="entry name" value="Ubiquitin-like_domsf"/>
</dbReference>
<dbReference type="InterPro" id="IPR005375">
    <property type="entry name" value="UFM1"/>
</dbReference>
<dbReference type="PANTHER" id="PTHR15825">
    <property type="entry name" value="UBIQUITIN-FOLD MODIFIER 1"/>
    <property type="match status" value="1"/>
</dbReference>
<dbReference type="PANTHER" id="PTHR15825:SF0">
    <property type="entry name" value="UBIQUITIN-FOLD MODIFIER 1"/>
    <property type="match status" value="1"/>
</dbReference>
<dbReference type="Pfam" id="PF03671">
    <property type="entry name" value="Ufm1"/>
    <property type="match status" value="1"/>
</dbReference>
<dbReference type="PIRSF" id="PIRSF038027">
    <property type="entry name" value="Ubiquitin-like_Ufm1"/>
    <property type="match status" value="1"/>
</dbReference>
<dbReference type="SUPFAM" id="SSF54236">
    <property type="entry name" value="Ubiquitin-like"/>
    <property type="match status" value="1"/>
</dbReference>
<comment type="function">
    <text evidence="1 3">Ubiquitin-like modifier which can be covalently attached via an isopeptide bond to substrate proteins as a monomer or a lysine-linked polymer (By similarity). The so-called ufmylation requires the ufm-1-activating E1 enzyme uba-5, the ufm-1-conjugating E2 enzyme ufc-1, and probably the ufm-1-ligase E3 enzyme ufl-1 (PubMed:23449979).</text>
</comment>
<comment type="subunit">
    <text evidence="4">Interacts with odr-8; leading to deufmylation.</text>
</comment>
<comment type="tissue specificity">
    <text evidence="3">Expressed in the intestine and head neurons.</text>
</comment>
<comment type="similarity">
    <text evidence="6">Belongs to the UFM1 family.</text>
</comment>
<organism>
    <name type="scientific">Caenorhabditis elegans</name>
    <dbReference type="NCBI Taxonomy" id="6239"/>
    <lineage>
        <taxon>Eukaryota</taxon>
        <taxon>Metazoa</taxon>
        <taxon>Ecdysozoa</taxon>
        <taxon>Nematoda</taxon>
        <taxon>Chromadorea</taxon>
        <taxon>Rhabditida</taxon>
        <taxon>Rhabditina</taxon>
        <taxon>Rhabditomorpha</taxon>
        <taxon>Rhabditoidea</taxon>
        <taxon>Rhabditidae</taxon>
        <taxon>Peloderinae</taxon>
        <taxon>Caenorhabditis</taxon>
    </lineage>
</organism>
<reference key="1">
    <citation type="journal article" date="1994" name="Nature">
        <title>2.2 Mb of contiguous nucleotide sequence from chromosome III of C. elegans.</title>
        <authorList>
            <person name="Wilson R."/>
            <person name="Ainscough R."/>
            <person name="Anderson K."/>
            <person name="Baynes C."/>
            <person name="Berks M."/>
            <person name="Bonfield J."/>
            <person name="Burton J."/>
            <person name="Connell M."/>
            <person name="Copsey T."/>
            <person name="Cooper J."/>
            <person name="Coulson A."/>
            <person name="Craxton M."/>
            <person name="Dear S."/>
            <person name="Du Z."/>
            <person name="Durbin R."/>
            <person name="Favello A."/>
            <person name="Fraser A."/>
            <person name="Fulton L."/>
            <person name="Gardner A."/>
            <person name="Green P."/>
            <person name="Hawkins T."/>
            <person name="Hillier L."/>
            <person name="Jier M."/>
            <person name="Johnston L."/>
            <person name="Jones M."/>
            <person name="Kershaw J."/>
            <person name="Kirsten J."/>
            <person name="Laisster N."/>
            <person name="Latreille P."/>
            <person name="Lightning J."/>
            <person name="Lloyd C."/>
            <person name="Mortimore B."/>
            <person name="O'Callaghan M."/>
            <person name="Parsons J."/>
            <person name="Percy C."/>
            <person name="Rifken L."/>
            <person name="Roopra A."/>
            <person name="Saunders D."/>
            <person name="Shownkeen R."/>
            <person name="Sims M."/>
            <person name="Smaldon N."/>
            <person name="Smith A."/>
            <person name="Smith M."/>
            <person name="Sonnhammer E."/>
            <person name="Staden R."/>
            <person name="Sulston J."/>
            <person name="Thierry-Mieg J."/>
            <person name="Thomas K."/>
            <person name="Vaudin M."/>
            <person name="Vaughan K."/>
            <person name="Waterston R."/>
            <person name="Watson A."/>
            <person name="Weinstock L."/>
            <person name="Wilkinson-Sproat J."/>
            <person name="Wohldman P."/>
        </authorList>
    </citation>
    <scope>NUCLEOTIDE SEQUENCE [LARGE SCALE GENOMIC DNA]</scope>
    <source>
        <strain>Bristol N2</strain>
    </source>
</reference>
<reference key="2">
    <citation type="journal article" date="1998" name="Science">
        <title>Genome sequence of the nematode C. elegans: a platform for investigating biology.</title>
        <authorList>
            <consortium name="The C. elegans sequencing consortium"/>
        </authorList>
    </citation>
    <scope>NUCLEOTIDE SEQUENCE [LARGE SCALE GENOMIC DNA]</scope>
    <source>
        <strain>Bristol N2</strain>
    </source>
</reference>
<reference key="3">
    <citation type="submission" date="2000-08" db="EMBL/GenBank/DDBJ databases">
        <title>The Caenorhabditis elegans transcriptome project, a complementary view of the genome.</title>
        <authorList>
            <person name="Kohara Y."/>
            <person name="Shin'i T."/>
            <person name="Suzuki Y."/>
            <person name="Sugano S."/>
            <person name="Potdevin M."/>
            <person name="Thierry-Mieg Y."/>
            <person name="Thierry-Mieg D."/>
            <person name="Thierry-Mieg J."/>
        </authorList>
    </citation>
    <scope>NUCLEOTIDE SEQUENCE [LARGE SCALE MRNA]</scope>
    <source>
        <strain>Bristol N2</strain>
    </source>
</reference>
<reference key="4">
    <citation type="journal article" date="2013" name="J. Biol. Chem.">
        <title>The ubiquitin-fold modifier 1 (Ufm1) cascade of Caenorhabditis elegans.</title>
        <authorList>
            <person name="Hertel P."/>
            <person name="Daniel J."/>
            <person name="Stegehake D."/>
            <person name="Vaupel H."/>
            <person name="Kailayangiri S."/>
            <person name="Gruel C."/>
            <person name="Woltersdorf C."/>
            <person name="Liebau E."/>
        </authorList>
    </citation>
    <scope>FUNCTION</scope>
    <scope>TISSUE SPECIFICITY</scope>
</reference>
<reference key="5">
    <citation type="journal article" date="2002" name="Proteins">
        <title>NMR structure of conserved eukaryotic protein ZK652.3 from C. elegans: a ubiquitin-like fold.</title>
        <authorList>
            <person name="Cort J.R."/>
            <person name="Chiang Y."/>
            <person name="Zheng D."/>
            <person name="Montelione G.T."/>
            <person name="Kennedy M.A."/>
        </authorList>
    </citation>
    <scope>STRUCTURE BY NMR</scope>
</reference>
<reference evidence="8" key="6">
    <citation type="journal article" date="2018" name="FEBS Lett.">
        <title>Structural basis for Ufm1 recognition by UfSP.</title>
        <authorList>
            <person name="Kim K.H."/>
            <person name="Ha B.H."/>
            <person name="Kim E.E."/>
        </authorList>
    </citation>
    <scope>X-RAY CRYSTALLOGRAPHY (3.29 ANGSTROMS) OF 11-94 IN COMPLEX WITH ODR-8</scope>
    <scope>INTERACTION WITH ODR-8</scope>
</reference>
<evidence type="ECO:0000250" key="1">
    <source>
        <dbReference type="UniProtKB" id="P61960"/>
    </source>
</evidence>
<evidence type="ECO:0000255" key="2"/>
<evidence type="ECO:0000269" key="3">
    <source>
    </source>
</evidence>
<evidence type="ECO:0000269" key="4">
    <source>
    </source>
</evidence>
<evidence type="ECO:0000303" key="5">
    <source>
    </source>
</evidence>
<evidence type="ECO:0000305" key="6"/>
<evidence type="ECO:0000312" key="7">
    <source>
        <dbReference type="WormBase" id="ZK652.3"/>
    </source>
</evidence>
<evidence type="ECO:0007744" key="8">
    <source>
        <dbReference type="PDB" id="5XDA"/>
    </source>
</evidence>
<evidence type="ECO:0007829" key="9">
    <source>
        <dbReference type="PDB" id="5XDA"/>
    </source>
</evidence>
<keyword id="KW-0002">3D-structure</keyword>
<keyword id="KW-1017">Isopeptide bond</keyword>
<keyword id="KW-1185">Reference proteome</keyword>
<keyword id="KW-0832">Ubl conjugation</keyword>
<keyword id="KW-0833">Ubl conjugation pathway</keyword>
<gene>
    <name evidence="7" type="primary">ufm-1</name>
    <name evidence="7" type="synonym">tag-277</name>
    <name evidence="7" type="ORF">ZK652.3</name>
</gene>
<name>UFM1_CAEEL</name>